<sequence>MSVTTKDVAYIAELARLKFTDAEQERMTDELNMILHYVDKLNEVDTEGVEPLNTIHDQINVLRADVEHTPLSNEEALKNAPDRQDRFFKVPKVIG</sequence>
<accession>B3QL05</accession>
<organism>
    <name type="scientific">Chlorobaculum parvum (strain DSM 263 / NCIMB 8327)</name>
    <name type="common">Chlorobium vibrioforme subsp. thiosulfatophilum</name>
    <dbReference type="NCBI Taxonomy" id="517417"/>
    <lineage>
        <taxon>Bacteria</taxon>
        <taxon>Pseudomonadati</taxon>
        <taxon>Chlorobiota</taxon>
        <taxon>Chlorobiia</taxon>
        <taxon>Chlorobiales</taxon>
        <taxon>Chlorobiaceae</taxon>
        <taxon>Chlorobaculum</taxon>
    </lineage>
</organism>
<name>GATC_CHLP8</name>
<comment type="function">
    <text evidence="1">Allows the formation of correctly charged Asn-tRNA(Asn) or Gln-tRNA(Gln) through the transamidation of misacylated Asp-tRNA(Asn) or Glu-tRNA(Gln) in organisms which lack either or both of asparaginyl-tRNA or glutaminyl-tRNA synthetases. The reaction takes place in the presence of glutamine and ATP through an activated phospho-Asp-tRNA(Asn) or phospho-Glu-tRNA(Gln).</text>
</comment>
<comment type="catalytic activity">
    <reaction evidence="1">
        <text>L-glutamyl-tRNA(Gln) + L-glutamine + ATP + H2O = L-glutaminyl-tRNA(Gln) + L-glutamate + ADP + phosphate + H(+)</text>
        <dbReference type="Rhea" id="RHEA:17521"/>
        <dbReference type="Rhea" id="RHEA-COMP:9681"/>
        <dbReference type="Rhea" id="RHEA-COMP:9684"/>
        <dbReference type="ChEBI" id="CHEBI:15377"/>
        <dbReference type="ChEBI" id="CHEBI:15378"/>
        <dbReference type="ChEBI" id="CHEBI:29985"/>
        <dbReference type="ChEBI" id="CHEBI:30616"/>
        <dbReference type="ChEBI" id="CHEBI:43474"/>
        <dbReference type="ChEBI" id="CHEBI:58359"/>
        <dbReference type="ChEBI" id="CHEBI:78520"/>
        <dbReference type="ChEBI" id="CHEBI:78521"/>
        <dbReference type="ChEBI" id="CHEBI:456216"/>
    </reaction>
</comment>
<comment type="catalytic activity">
    <reaction evidence="1">
        <text>L-aspartyl-tRNA(Asn) + L-glutamine + ATP + H2O = L-asparaginyl-tRNA(Asn) + L-glutamate + ADP + phosphate + 2 H(+)</text>
        <dbReference type="Rhea" id="RHEA:14513"/>
        <dbReference type="Rhea" id="RHEA-COMP:9674"/>
        <dbReference type="Rhea" id="RHEA-COMP:9677"/>
        <dbReference type="ChEBI" id="CHEBI:15377"/>
        <dbReference type="ChEBI" id="CHEBI:15378"/>
        <dbReference type="ChEBI" id="CHEBI:29985"/>
        <dbReference type="ChEBI" id="CHEBI:30616"/>
        <dbReference type="ChEBI" id="CHEBI:43474"/>
        <dbReference type="ChEBI" id="CHEBI:58359"/>
        <dbReference type="ChEBI" id="CHEBI:78515"/>
        <dbReference type="ChEBI" id="CHEBI:78516"/>
        <dbReference type="ChEBI" id="CHEBI:456216"/>
    </reaction>
</comment>
<comment type="subunit">
    <text evidence="1">Heterotrimer of A, B and C subunits.</text>
</comment>
<comment type="similarity">
    <text evidence="1">Belongs to the GatC family.</text>
</comment>
<protein>
    <recommendedName>
        <fullName evidence="1">Aspartyl/glutamyl-tRNA(Asn/Gln) amidotransferase subunit C</fullName>
        <shortName evidence="1">Asp/Glu-ADT subunit C</shortName>
        <ecNumber evidence="1">6.3.5.-</ecNumber>
    </recommendedName>
</protein>
<gene>
    <name evidence="1" type="primary">gatC</name>
    <name type="ordered locus">Cpar_0369</name>
</gene>
<evidence type="ECO:0000255" key="1">
    <source>
        <dbReference type="HAMAP-Rule" id="MF_00122"/>
    </source>
</evidence>
<reference key="1">
    <citation type="submission" date="2008-06" db="EMBL/GenBank/DDBJ databases">
        <title>Complete sequence of Chlorobaculum parvum NCIB 8327.</title>
        <authorList>
            <consortium name="US DOE Joint Genome Institute"/>
            <person name="Lucas S."/>
            <person name="Copeland A."/>
            <person name="Lapidus A."/>
            <person name="Glavina del Rio T."/>
            <person name="Dalin E."/>
            <person name="Tice H."/>
            <person name="Bruce D."/>
            <person name="Goodwin L."/>
            <person name="Pitluck S."/>
            <person name="Schmutz J."/>
            <person name="Larimer F."/>
            <person name="Land M."/>
            <person name="Hauser L."/>
            <person name="Kyrpides N."/>
            <person name="Mikhailova N."/>
            <person name="Zhao F."/>
            <person name="Li T."/>
            <person name="Liu Z."/>
            <person name="Overmann J."/>
            <person name="Bryant D.A."/>
            <person name="Richardson P."/>
        </authorList>
    </citation>
    <scope>NUCLEOTIDE SEQUENCE [LARGE SCALE GENOMIC DNA]</scope>
    <source>
        <strain>DSM 263 / NCIMB 8327</strain>
    </source>
</reference>
<dbReference type="EC" id="6.3.5.-" evidence="1"/>
<dbReference type="EMBL" id="CP001099">
    <property type="protein sequence ID" value="ACF10793.1"/>
    <property type="molecule type" value="Genomic_DNA"/>
</dbReference>
<dbReference type="RefSeq" id="WP_012501626.1">
    <property type="nucleotide sequence ID" value="NC_011027.1"/>
</dbReference>
<dbReference type="SMR" id="B3QL05"/>
<dbReference type="STRING" id="517417.Cpar_0369"/>
<dbReference type="KEGG" id="cpc:Cpar_0369"/>
<dbReference type="eggNOG" id="COG0721">
    <property type="taxonomic scope" value="Bacteria"/>
</dbReference>
<dbReference type="HOGENOM" id="CLU_105899_1_2_10"/>
<dbReference type="OrthoDB" id="9813938at2"/>
<dbReference type="Proteomes" id="UP000008811">
    <property type="component" value="Chromosome"/>
</dbReference>
<dbReference type="GO" id="GO:0050566">
    <property type="term" value="F:asparaginyl-tRNA synthase (glutamine-hydrolyzing) activity"/>
    <property type="evidence" value="ECO:0007669"/>
    <property type="project" value="RHEA"/>
</dbReference>
<dbReference type="GO" id="GO:0005524">
    <property type="term" value="F:ATP binding"/>
    <property type="evidence" value="ECO:0007669"/>
    <property type="project" value="UniProtKB-KW"/>
</dbReference>
<dbReference type="GO" id="GO:0050567">
    <property type="term" value="F:glutaminyl-tRNA synthase (glutamine-hydrolyzing) activity"/>
    <property type="evidence" value="ECO:0007669"/>
    <property type="project" value="UniProtKB-UniRule"/>
</dbReference>
<dbReference type="GO" id="GO:0070681">
    <property type="term" value="P:glutaminyl-tRNAGln biosynthesis via transamidation"/>
    <property type="evidence" value="ECO:0007669"/>
    <property type="project" value="TreeGrafter"/>
</dbReference>
<dbReference type="GO" id="GO:0006450">
    <property type="term" value="P:regulation of translational fidelity"/>
    <property type="evidence" value="ECO:0007669"/>
    <property type="project" value="InterPro"/>
</dbReference>
<dbReference type="GO" id="GO:0006412">
    <property type="term" value="P:translation"/>
    <property type="evidence" value="ECO:0007669"/>
    <property type="project" value="UniProtKB-UniRule"/>
</dbReference>
<dbReference type="Gene3D" id="1.10.20.60">
    <property type="entry name" value="Glu-tRNAGln amidotransferase C subunit, N-terminal domain"/>
    <property type="match status" value="1"/>
</dbReference>
<dbReference type="HAMAP" id="MF_00122">
    <property type="entry name" value="GatC"/>
    <property type="match status" value="1"/>
</dbReference>
<dbReference type="InterPro" id="IPR036113">
    <property type="entry name" value="Asp/Glu-ADT_sf_sub_c"/>
</dbReference>
<dbReference type="InterPro" id="IPR003837">
    <property type="entry name" value="GatC"/>
</dbReference>
<dbReference type="NCBIfam" id="TIGR00135">
    <property type="entry name" value="gatC"/>
    <property type="match status" value="1"/>
</dbReference>
<dbReference type="PANTHER" id="PTHR15004">
    <property type="entry name" value="GLUTAMYL-TRNA(GLN) AMIDOTRANSFERASE SUBUNIT C, MITOCHONDRIAL"/>
    <property type="match status" value="1"/>
</dbReference>
<dbReference type="PANTHER" id="PTHR15004:SF0">
    <property type="entry name" value="GLUTAMYL-TRNA(GLN) AMIDOTRANSFERASE SUBUNIT C, MITOCHONDRIAL"/>
    <property type="match status" value="1"/>
</dbReference>
<dbReference type="Pfam" id="PF02686">
    <property type="entry name" value="GatC"/>
    <property type="match status" value="1"/>
</dbReference>
<dbReference type="SUPFAM" id="SSF141000">
    <property type="entry name" value="Glu-tRNAGln amidotransferase C subunit"/>
    <property type="match status" value="1"/>
</dbReference>
<feature type="chain" id="PRO_1000095270" description="Aspartyl/glutamyl-tRNA(Asn/Gln) amidotransferase subunit C">
    <location>
        <begin position="1"/>
        <end position="95"/>
    </location>
</feature>
<keyword id="KW-0067">ATP-binding</keyword>
<keyword id="KW-0436">Ligase</keyword>
<keyword id="KW-0547">Nucleotide-binding</keyword>
<keyword id="KW-0648">Protein biosynthesis</keyword>
<proteinExistence type="inferred from homology"/>